<keyword id="KW-0963">Cytoplasm</keyword>
<keyword id="KW-0489">Methyltransferase</keyword>
<keyword id="KW-1185">Reference proteome</keyword>
<keyword id="KW-0698">rRNA processing</keyword>
<keyword id="KW-0949">S-adenosyl-L-methionine</keyword>
<keyword id="KW-0808">Transferase</keyword>
<sequence length="301" mass="33212">MLSEVLEMLAVRPDGIYVDCTFGRGGHSRAILERLGPEGRLLAIDRDLEAVAAAGATGLSADARFGIEHGRFSDVGRFVGARGWTGRVDGILMDLGVSSPQLDNARRGFSFLRAGPLDMRMDPTQKTTAAEWLAEVSERELARVLRDYGEERFAGRIARAVVEERRRRPIVTTTDLVRLIEAAIPFKDKFKHPATRTFQAIRIAVNDELGQLQQGLNEAVEVLAAGGRLVVISFHSLEDRIVKRFMRDEARGREMAGGIFETRSCPRLAVLGKPLKAGDDEIRINPRARSALLRAAEKRAA</sequence>
<feature type="chain" id="PRO_0000108656" description="Ribosomal RNA small subunit methyltransferase H">
    <location>
        <begin position="1"/>
        <end position="301"/>
    </location>
</feature>
<feature type="binding site" evidence="1">
    <location>
        <begin position="25"/>
        <end position="27"/>
    </location>
    <ligand>
        <name>S-adenosyl-L-methionine</name>
        <dbReference type="ChEBI" id="CHEBI:59789"/>
    </ligand>
</feature>
<feature type="binding site" evidence="1">
    <location>
        <position position="45"/>
    </location>
    <ligand>
        <name>S-adenosyl-L-methionine</name>
        <dbReference type="ChEBI" id="CHEBI:59789"/>
    </ligand>
</feature>
<feature type="binding site" evidence="1">
    <location>
        <position position="72"/>
    </location>
    <ligand>
        <name>S-adenosyl-L-methionine</name>
        <dbReference type="ChEBI" id="CHEBI:59789"/>
    </ligand>
</feature>
<feature type="binding site" evidence="1">
    <location>
        <position position="94"/>
    </location>
    <ligand>
        <name>S-adenosyl-L-methionine</name>
        <dbReference type="ChEBI" id="CHEBI:59789"/>
    </ligand>
</feature>
<feature type="binding site" evidence="1">
    <location>
        <position position="101"/>
    </location>
    <ligand>
        <name>S-adenosyl-L-methionine</name>
        <dbReference type="ChEBI" id="CHEBI:59789"/>
    </ligand>
</feature>
<comment type="function">
    <text evidence="1">Specifically methylates the N4 position of cytidine in position 1402 (C1402) of 16S rRNA.</text>
</comment>
<comment type="catalytic activity">
    <reaction evidence="1">
        <text>cytidine(1402) in 16S rRNA + S-adenosyl-L-methionine = N(4)-methylcytidine(1402) in 16S rRNA + S-adenosyl-L-homocysteine + H(+)</text>
        <dbReference type="Rhea" id="RHEA:42928"/>
        <dbReference type="Rhea" id="RHEA-COMP:10286"/>
        <dbReference type="Rhea" id="RHEA-COMP:10287"/>
        <dbReference type="ChEBI" id="CHEBI:15378"/>
        <dbReference type="ChEBI" id="CHEBI:57856"/>
        <dbReference type="ChEBI" id="CHEBI:59789"/>
        <dbReference type="ChEBI" id="CHEBI:74506"/>
        <dbReference type="ChEBI" id="CHEBI:82748"/>
        <dbReference type="EC" id="2.1.1.199"/>
    </reaction>
</comment>
<comment type="subcellular location">
    <subcellularLocation>
        <location evidence="1">Cytoplasm</location>
    </subcellularLocation>
</comment>
<comment type="similarity">
    <text evidence="1">Belongs to the methyltransferase superfamily. RsmH family.</text>
</comment>
<evidence type="ECO:0000255" key="1">
    <source>
        <dbReference type="HAMAP-Rule" id="MF_01007"/>
    </source>
</evidence>
<protein>
    <recommendedName>
        <fullName evidence="1">Ribosomal RNA small subunit methyltransferase H</fullName>
        <ecNumber evidence="1">2.1.1.199</ecNumber>
    </recommendedName>
    <alternativeName>
        <fullName evidence="1">16S rRNA m(4)C1402 methyltransferase</fullName>
    </alternativeName>
    <alternativeName>
        <fullName evidence="1">rRNA (cytosine-N(4)-)-methyltransferase RsmH</fullName>
    </alternativeName>
</protein>
<gene>
    <name evidence="1" type="primary">rsmH</name>
    <name type="synonym">mraW</name>
    <name type="ordered locus">MCA2436</name>
</gene>
<proteinExistence type="inferred from homology"/>
<reference key="1">
    <citation type="journal article" date="2004" name="PLoS Biol.">
        <title>Genomic insights into methanotrophy: the complete genome sequence of Methylococcus capsulatus (Bath).</title>
        <authorList>
            <person name="Ward N.L."/>
            <person name="Larsen O."/>
            <person name="Sakwa J."/>
            <person name="Bruseth L."/>
            <person name="Khouri H.M."/>
            <person name="Durkin A.S."/>
            <person name="Dimitrov G."/>
            <person name="Jiang L."/>
            <person name="Scanlan D."/>
            <person name="Kang K.H."/>
            <person name="Lewis M.R."/>
            <person name="Nelson K.E."/>
            <person name="Methe B.A."/>
            <person name="Wu M."/>
            <person name="Heidelberg J.F."/>
            <person name="Paulsen I.T."/>
            <person name="Fouts D.E."/>
            <person name="Ravel J."/>
            <person name="Tettelin H."/>
            <person name="Ren Q."/>
            <person name="Read T.D."/>
            <person name="DeBoy R.T."/>
            <person name="Seshadri R."/>
            <person name="Salzberg S.L."/>
            <person name="Jensen H.B."/>
            <person name="Birkeland N.K."/>
            <person name="Nelson W.C."/>
            <person name="Dodson R.J."/>
            <person name="Grindhaug S.H."/>
            <person name="Holt I.E."/>
            <person name="Eidhammer I."/>
            <person name="Jonasen I."/>
            <person name="Vanaken S."/>
            <person name="Utterback T.R."/>
            <person name="Feldblyum T.V."/>
            <person name="Fraser C.M."/>
            <person name="Lillehaug J.R."/>
            <person name="Eisen J.A."/>
        </authorList>
    </citation>
    <scope>NUCLEOTIDE SEQUENCE [LARGE SCALE GENOMIC DNA]</scope>
    <source>
        <strain>ATCC 33009 / NCIMB 11132 / Bath</strain>
    </source>
</reference>
<name>RSMH_METCA</name>
<dbReference type="EC" id="2.1.1.199" evidence="1"/>
<dbReference type="EMBL" id="AE017282">
    <property type="protein sequence ID" value="AAU91463.1"/>
    <property type="molecule type" value="Genomic_DNA"/>
</dbReference>
<dbReference type="SMR" id="Q604V0"/>
<dbReference type="STRING" id="243233.MCA2436"/>
<dbReference type="KEGG" id="mca:MCA2436"/>
<dbReference type="eggNOG" id="COG0275">
    <property type="taxonomic scope" value="Bacteria"/>
</dbReference>
<dbReference type="HOGENOM" id="CLU_038422_2_0_6"/>
<dbReference type="Proteomes" id="UP000006821">
    <property type="component" value="Chromosome"/>
</dbReference>
<dbReference type="GO" id="GO:0005737">
    <property type="term" value="C:cytoplasm"/>
    <property type="evidence" value="ECO:0007669"/>
    <property type="project" value="UniProtKB-SubCell"/>
</dbReference>
<dbReference type="GO" id="GO:0071424">
    <property type="term" value="F:rRNA (cytosine-N4-)-methyltransferase activity"/>
    <property type="evidence" value="ECO:0007669"/>
    <property type="project" value="UniProtKB-UniRule"/>
</dbReference>
<dbReference type="GO" id="GO:0070475">
    <property type="term" value="P:rRNA base methylation"/>
    <property type="evidence" value="ECO:0007669"/>
    <property type="project" value="UniProtKB-UniRule"/>
</dbReference>
<dbReference type="FunFam" id="1.10.150.170:FF:000001">
    <property type="entry name" value="Ribosomal RNA small subunit methyltransferase H"/>
    <property type="match status" value="1"/>
</dbReference>
<dbReference type="Gene3D" id="1.10.150.170">
    <property type="entry name" value="Putative methyltransferase TM0872, insert domain"/>
    <property type="match status" value="1"/>
</dbReference>
<dbReference type="Gene3D" id="3.40.50.150">
    <property type="entry name" value="Vaccinia Virus protein VP39"/>
    <property type="match status" value="1"/>
</dbReference>
<dbReference type="HAMAP" id="MF_01007">
    <property type="entry name" value="16SrRNA_methyltr_H"/>
    <property type="match status" value="1"/>
</dbReference>
<dbReference type="InterPro" id="IPR002903">
    <property type="entry name" value="RsmH"/>
</dbReference>
<dbReference type="InterPro" id="IPR023397">
    <property type="entry name" value="SAM-dep_MeTrfase_MraW_recog"/>
</dbReference>
<dbReference type="InterPro" id="IPR029063">
    <property type="entry name" value="SAM-dependent_MTases_sf"/>
</dbReference>
<dbReference type="NCBIfam" id="TIGR00006">
    <property type="entry name" value="16S rRNA (cytosine(1402)-N(4))-methyltransferase RsmH"/>
    <property type="match status" value="1"/>
</dbReference>
<dbReference type="PANTHER" id="PTHR11265:SF0">
    <property type="entry name" value="12S RRNA N4-METHYLCYTIDINE METHYLTRANSFERASE"/>
    <property type="match status" value="1"/>
</dbReference>
<dbReference type="PANTHER" id="PTHR11265">
    <property type="entry name" value="S-ADENOSYL-METHYLTRANSFERASE MRAW"/>
    <property type="match status" value="1"/>
</dbReference>
<dbReference type="Pfam" id="PF01795">
    <property type="entry name" value="Methyltransf_5"/>
    <property type="match status" value="1"/>
</dbReference>
<dbReference type="PIRSF" id="PIRSF004486">
    <property type="entry name" value="MraW"/>
    <property type="match status" value="1"/>
</dbReference>
<dbReference type="SUPFAM" id="SSF81799">
    <property type="entry name" value="Putative methyltransferase TM0872, insert domain"/>
    <property type="match status" value="1"/>
</dbReference>
<dbReference type="SUPFAM" id="SSF53335">
    <property type="entry name" value="S-adenosyl-L-methionine-dependent methyltransferases"/>
    <property type="match status" value="1"/>
</dbReference>
<organism>
    <name type="scientific">Methylococcus capsulatus (strain ATCC 33009 / NCIMB 11132 / Bath)</name>
    <dbReference type="NCBI Taxonomy" id="243233"/>
    <lineage>
        <taxon>Bacteria</taxon>
        <taxon>Pseudomonadati</taxon>
        <taxon>Pseudomonadota</taxon>
        <taxon>Gammaproteobacteria</taxon>
        <taxon>Methylococcales</taxon>
        <taxon>Methylococcaceae</taxon>
        <taxon>Methylococcus</taxon>
    </lineage>
</organism>
<accession>Q604V0</accession>